<name>CAPSH_ADE07</name>
<proteinExistence type="inferred from homology"/>
<gene>
    <name evidence="1" type="primary">L3</name>
</gene>
<accession>P36851</accession>
<organismHost>
    <name type="scientific">Homo sapiens</name>
    <name type="common">Human</name>
    <dbReference type="NCBI Taxonomy" id="9606"/>
</organismHost>
<comment type="function">
    <text evidence="1">Major capsid protein that self-associates to form 240 hexon trimers, each in the shape of a hexagon, building most of the pseudo T=25 capsid. Assembled into trimeric units with the help of the chaperone shutoff protein. Transported by pre-protein VI to the nucleus where it associates with other structural proteins to form an empty capsid. Might be involved, through its interaction with host dyneins, in the intracellular microtubule-dependent transport of incoming viral capsid to the nucleus.</text>
</comment>
<comment type="subunit">
    <text evidence="1">Homotrimer. Interacts with the capsid vertex protein; this interaction binds the peripentonal hexons to the neighboring penton base. Interacts with the hexon-linking protein; this interaction tethers the hexons surrounding the penton to those situated in the central plate of the facet. Interacts with the hexon-interlacing protein; this interaction lashes the hexons together. Interacts with host dyneins DYNC1LI1 and DYNC1I2; this interaction might be involved in intracellular microtubule-dependent transport of incoming viral capsid. Interacts with the shutoff protein; this interaction allows folding and formation of hexons trimers. Interacts with pre-protein VI; this interaction probably allows nuclear import of hexon trimers and possibly pre-capsid assembly.</text>
</comment>
<comment type="subcellular location">
    <subcellularLocation>
        <location evidence="1">Virion</location>
    </subcellularLocation>
    <subcellularLocation>
        <location evidence="1">Host nucleus</location>
    </subcellularLocation>
    <text evidence="1">Forms the capsid icosahedric shell. Present in 720 copies per virion, assembled in 240 trimers.</text>
</comment>
<comment type="induction">
    <text evidence="1">Expressed in the late phase of the viral replicative cycle.</text>
</comment>
<comment type="miscellaneous">
    <text evidence="1">All late proteins expressed from the major late promoter are produced by alternative splicing and alternative polyadenylation of the same gene giving rise to non-overlapping ORFs. A leader sequence is present in the N-terminus of all these mRNAs and is recognized by the viral shutoff protein to provide expression although conventional translation via ribosome scanning from the cap has been shut off in the host cell.</text>
</comment>
<comment type="similarity">
    <text evidence="1 3">Belongs to the adenoviridae hexon protein family.</text>
</comment>
<sequence length="937" mass="105840">MATPSMMPQWAYMHIAGQDASEYLSPGLVQLARATDTYFSMGNKFRNPTVAPTHDVTTDRRQRLMLRFVPVDREDHTYSYKVRYTLAVGDNRVLDMASTFFDIRGVLDRGPSFKPYSGTAYNSLAPKGAPNTSQWIVTAGEERAVTTTTNTFGIASMKGDNITKEGLEIGKDITADNKPIYADKTYQPEPQVGEESWTDTDGTNEKFGGRALKPATKMKPCYGSFARPTNIKGGQAKNRKVKPTEGDVETEEPDIDMEFFDGREARDAFSPEIVLYTENVNLETPDSHVVYKPGTSDDNSHANLGQQAMPNRPNYIGFRDNFVGLMYYNSTGNMGVLAGQASQLNAVVDLQDRNTELSYQLLLDSLGDRTRYFSMWNQAVDSYDPDVRIIENHGIEDELPNYCFPLDGIGPAKTYQGIKSKDNGWEKDDNVSKSNEIAIGNNQAMEINIQANLWRSFLYSNVALYLPDVYKYTPTNITLPANTNTYEYMNGRVVSPSLVDSYINIGARWSLDPMDNVNPFNHHRNAGLRYRSMLLGNGRYVPFHIQVPQKFFAVKNLLLLPGSYTYEWNFRKDVNMVLQSSLGNDLRTDGASISFTSINLYATFFPMAHNTASTLEAMLRNDTNDQSFNDYLSAANMLYPIPANATNIPISIPSRNWAAFRGWSFTRLKTKETPSLGSGFDPYFVYSGSIPYLDGTFYLNHTFKKVSIMFDSSVSWPGNDRLLSPNEFEIKRTVDGEGYNVAQCNMTKDWFLVQMLANYNIGYQGFYIPEGYKDRMYSFFRNFQPMSRQVVDEVNYTDYKAVTLPYQHNNSGFVGYLAPTMRQGEPYPANYPYPLIGTTAVKSVTQKKFLCDRTMWRIPFSSNFMSMGALTDLGQNMLYANSAHALDMTFEVDPMDEPTLLYLLFEVFDVVRVHQPHRGVIEAVYLRTPFSAGNATT</sequence>
<protein>
    <recommendedName>
        <fullName evidence="1">Hexon protein</fullName>
        <shortName evidence="1">CP-H</shortName>
    </recommendedName>
    <alternativeName>
        <fullName evidence="1">Protein II</fullName>
    </alternativeName>
</protein>
<reference key="1">
    <citation type="journal article" date="1995" name="Res. Virol.">
        <title>Hexon sequence of adenovirus type 7 and comparison with other serotypes of subgenus B.</title>
        <authorList>
            <person name="Pring-Akerblom P."/>
            <person name="Trijssenaar F.E.J."/>
            <person name="Adrian T."/>
        </authorList>
    </citation>
    <scope>NUCLEOTIDE SEQUENCE [GENOMIC DNA]</scope>
    <source>
        <strain>Gomen</strain>
    </source>
</reference>
<organism>
    <name type="scientific">Human adenovirus B serotype 7</name>
    <name type="common">HAdV-7</name>
    <name type="synonym">Human adenovirus 7</name>
    <dbReference type="NCBI Taxonomy" id="10519"/>
    <lineage>
        <taxon>Viruses</taxon>
        <taxon>Varidnaviria</taxon>
        <taxon>Bamfordvirae</taxon>
        <taxon>Preplasmiviricota</taxon>
        <taxon>Tectiliviricetes</taxon>
        <taxon>Rowavirales</taxon>
        <taxon>Adenoviridae</taxon>
        <taxon>Mastadenovirus</taxon>
        <taxon>Human mastadenovirus B</taxon>
    </lineage>
</organism>
<dbReference type="EMBL" id="X76551">
    <property type="protein sequence ID" value="CAA54053.1"/>
    <property type="molecule type" value="Genomic_DNA"/>
</dbReference>
<dbReference type="PIR" id="S39301">
    <property type="entry name" value="S39301"/>
</dbReference>
<dbReference type="SMR" id="P36851"/>
<dbReference type="GO" id="GO:0043657">
    <property type="term" value="C:host cell"/>
    <property type="evidence" value="ECO:0007669"/>
    <property type="project" value="GOC"/>
</dbReference>
<dbReference type="GO" id="GO:0042025">
    <property type="term" value="C:host cell nucleus"/>
    <property type="evidence" value="ECO:0007669"/>
    <property type="project" value="UniProtKB-SubCell"/>
</dbReference>
<dbReference type="GO" id="GO:0039623">
    <property type="term" value="C:T=25 icosahedral viral capsid"/>
    <property type="evidence" value="ECO:0007669"/>
    <property type="project" value="UniProtKB-UniRule"/>
</dbReference>
<dbReference type="GO" id="GO:0005198">
    <property type="term" value="F:structural molecule activity"/>
    <property type="evidence" value="ECO:0007669"/>
    <property type="project" value="UniProtKB-UniRule"/>
</dbReference>
<dbReference type="GO" id="GO:0075521">
    <property type="term" value="P:microtubule-dependent intracellular transport of viral material towards nucleus"/>
    <property type="evidence" value="ECO:0007669"/>
    <property type="project" value="UniProtKB-UniRule"/>
</dbReference>
<dbReference type="GO" id="GO:0046718">
    <property type="term" value="P:symbiont entry into host cell"/>
    <property type="evidence" value="ECO:0007669"/>
    <property type="project" value="UniProtKB-UniRule"/>
</dbReference>
<dbReference type="FunFam" id="2.70.9.10:FF:000001">
    <property type="entry name" value="Hexon protein"/>
    <property type="match status" value="1"/>
</dbReference>
<dbReference type="Gene3D" id="2.170.9.10">
    <property type="entry name" value="Adenovirus Type 2 Hexon, domain 1"/>
    <property type="match status" value="1"/>
</dbReference>
<dbReference type="Gene3D" id="2.70.9.10">
    <property type="entry name" value="Adenovirus Type 2 Hexon, domain 4"/>
    <property type="match status" value="2"/>
</dbReference>
<dbReference type="Gene3D" id="3.90.39.10">
    <property type="entry name" value="Hexon Major Viral Coat Protein, domain 2"/>
    <property type="match status" value="1"/>
</dbReference>
<dbReference type="HAMAP" id="MF_04051">
    <property type="entry name" value="ADV_CAPSH"/>
    <property type="match status" value="1"/>
</dbReference>
<dbReference type="InterPro" id="IPR016108">
    <property type="entry name" value="Adenovirus_Pll_hexon_C"/>
</dbReference>
<dbReference type="InterPro" id="IPR016107">
    <property type="entry name" value="Adenovirus_Pll_hexon_N"/>
</dbReference>
<dbReference type="InterPro" id="IPR044942">
    <property type="entry name" value="Adenovirus_Pll_hexon_sub2"/>
</dbReference>
<dbReference type="InterPro" id="IPR037542">
    <property type="entry name" value="ADV_hexon"/>
</dbReference>
<dbReference type="InterPro" id="IPR016112">
    <property type="entry name" value="VP_dsDNA_II"/>
</dbReference>
<dbReference type="Pfam" id="PF01065">
    <property type="entry name" value="Adeno_hexon"/>
    <property type="match status" value="1"/>
</dbReference>
<dbReference type="Pfam" id="PF03678">
    <property type="entry name" value="Adeno_hexon_C"/>
    <property type="match status" value="1"/>
</dbReference>
<dbReference type="SUPFAM" id="SSF49749">
    <property type="entry name" value="Group II dsDNA viruses VP"/>
    <property type="match status" value="2"/>
</dbReference>
<evidence type="ECO:0000255" key="1">
    <source>
        <dbReference type="HAMAP-Rule" id="MF_04051"/>
    </source>
</evidence>
<evidence type="ECO:0000256" key="2">
    <source>
        <dbReference type="SAM" id="MobiDB-lite"/>
    </source>
</evidence>
<evidence type="ECO:0000305" key="3"/>
<keyword id="KW-0007">Acetylation</keyword>
<keyword id="KW-0167">Capsid protein</keyword>
<keyword id="KW-1176">Cytoplasmic inwards viral transport</keyword>
<keyword id="KW-1048">Host nucleus</keyword>
<keyword id="KW-0945">Host-virus interaction</keyword>
<keyword id="KW-0426">Late protein</keyword>
<keyword id="KW-1177">Microtubular inwards viral transport</keyword>
<keyword id="KW-0597">Phosphoprotein</keyword>
<keyword id="KW-1148">T=25 icosahedral capsid protein</keyword>
<keyword id="KW-0946">Virion</keyword>
<keyword id="KW-1160">Virus entry into host cell</keyword>
<feature type="initiator methionine" description="Removed; by host" evidence="1">
    <location>
        <position position="1"/>
    </location>
</feature>
<feature type="chain" id="PRO_0000221818" description="Hexon protein" evidence="1">
    <location>
        <begin position="2"/>
        <end position="937"/>
    </location>
</feature>
<feature type="region of interest" description="Disordered" evidence="2">
    <location>
        <begin position="190"/>
        <end position="210"/>
    </location>
</feature>
<feature type="region of interest" description="Disordered" evidence="2">
    <location>
        <begin position="224"/>
        <end position="251"/>
    </location>
</feature>
<feature type="site" description="Involved in interaction with pre-protein VI" evidence="1">
    <location>
        <position position="762"/>
    </location>
</feature>
<feature type="modified residue" description="N-acetylalanine; by host" evidence="1">
    <location>
        <position position="2"/>
    </location>
</feature>
<feature type="modified residue" description="Phosphotyrosine; by host" evidence="1">
    <location>
        <position position="925"/>
    </location>
</feature>